<keyword id="KW-0533">Nickel</keyword>
<keyword id="KW-1185">Reference proteome</keyword>
<gene>
    <name type="ordered locus">WS0139</name>
</gene>
<accession>Q7MSU1</accession>
<reference key="1">
    <citation type="journal article" date="2003" name="Proc. Natl. Acad. Sci. U.S.A.">
        <title>Complete genome sequence and analysis of Wolinella succinogenes.</title>
        <authorList>
            <person name="Baar C."/>
            <person name="Eppinger M."/>
            <person name="Raddatz G."/>
            <person name="Simon J."/>
            <person name="Lanz C."/>
            <person name="Klimmek O."/>
            <person name="Nandakumar R."/>
            <person name="Gross R."/>
            <person name="Rosinus A."/>
            <person name="Keller H."/>
            <person name="Jagtap P."/>
            <person name="Linke B."/>
            <person name="Meyer F."/>
            <person name="Lederer H."/>
            <person name="Schuster S.C."/>
        </authorList>
    </citation>
    <scope>NUCLEOTIDE SEQUENCE [LARGE SCALE GENOMIC DNA]</scope>
    <source>
        <strain>ATCC 29543 / DSM 1740 / CCUG 13145 / JCM 31913 / LMG 7466 / NCTC 11488 / FDC 602W</strain>
    </source>
</reference>
<comment type="similarity">
    <text evidence="1">Belongs to the LarC family.</text>
</comment>
<evidence type="ECO:0000255" key="1">
    <source>
        <dbReference type="HAMAP-Rule" id="MF_01074"/>
    </source>
</evidence>
<organism>
    <name type="scientific">Wolinella succinogenes (strain ATCC 29543 / DSM 1740 / CCUG 13145 / JCM 31913 / LMG 7466 / NCTC 11488 / FDC 602W)</name>
    <name type="common">Vibrio succinogenes</name>
    <dbReference type="NCBI Taxonomy" id="273121"/>
    <lineage>
        <taxon>Bacteria</taxon>
        <taxon>Pseudomonadati</taxon>
        <taxon>Campylobacterota</taxon>
        <taxon>Epsilonproteobacteria</taxon>
        <taxon>Campylobacterales</taxon>
        <taxon>Helicobacteraceae</taxon>
        <taxon>Wolinella</taxon>
    </lineage>
</organism>
<name>Y139_WOLSU</name>
<dbReference type="EMBL" id="BX571657">
    <property type="protein sequence ID" value="CAE09302.1"/>
    <property type="molecule type" value="Genomic_DNA"/>
</dbReference>
<dbReference type="RefSeq" id="WP_011138102.1">
    <property type="nucleotide sequence ID" value="NC_005090.1"/>
</dbReference>
<dbReference type="SMR" id="Q7MSU1"/>
<dbReference type="STRING" id="273121.WS0139"/>
<dbReference type="KEGG" id="wsu:WS0139"/>
<dbReference type="eggNOG" id="COG1641">
    <property type="taxonomic scope" value="Bacteria"/>
</dbReference>
<dbReference type="HOGENOM" id="CLU_028523_2_1_7"/>
<dbReference type="Proteomes" id="UP000000422">
    <property type="component" value="Chromosome"/>
</dbReference>
<dbReference type="GO" id="GO:0016829">
    <property type="term" value="F:lyase activity"/>
    <property type="evidence" value="ECO:0007669"/>
    <property type="project" value="UniProtKB-UniRule"/>
</dbReference>
<dbReference type="GO" id="GO:0016151">
    <property type="term" value="F:nickel cation binding"/>
    <property type="evidence" value="ECO:0007669"/>
    <property type="project" value="UniProtKB-UniRule"/>
</dbReference>
<dbReference type="Gene3D" id="3.10.20.300">
    <property type="entry name" value="mk0293 like domain"/>
    <property type="match status" value="1"/>
</dbReference>
<dbReference type="Gene3D" id="3.30.70.1380">
    <property type="entry name" value="Transcriptional regulatory protein pf0864 domain like"/>
    <property type="match status" value="1"/>
</dbReference>
<dbReference type="HAMAP" id="MF_01074">
    <property type="entry name" value="LarC"/>
    <property type="match status" value="1"/>
</dbReference>
<dbReference type="InterPro" id="IPR002822">
    <property type="entry name" value="Ni_insertion"/>
</dbReference>
<dbReference type="NCBIfam" id="TIGR00299">
    <property type="entry name" value="nickel pincer cofactor biosynthesis protein LarC"/>
    <property type="match status" value="1"/>
</dbReference>
<dbReference type="PANTHER" id="PTHR36566">
    <property type="entry name" value="NICKEL INSERTION PROTEIN-RELATED"/>
    <property type="match status" value="1"/>
</dbReference>
<dbReference type="PANTHER" id="PTHR36566:SF1">
    <property type="entry name" value="PYRIDINIUM-3,5-BISTHIOCARBOXYLIC ACID MONONUCLEOTIDE NICKEL INSERTION PROTEIN"/>
    <property type="match status" value="1"/>
</dbReference>
<dbReference type="Pfam" id="PF01969">
    <property type="entry name" value="Ni_insertion"/>
    <property type="match status" value="1"/>
</dbReference>
<protein>
    <recommendedName>
        <fullName evidence="1">Putative nickel insertion protein</fullName>
    </recommendedName>
</protein>
<feature type="chain" id="PRO_0000146857" description="Putative nickel insertion protein">
    <location>
        <begin position="1"/>
        <end position="396"/>
    </location>
</feature>
<proteinExistence type="inferred from homology"/>
<sequence length="396" mass="43611">MKILYYDCFSGISGDMHLGALVDLGVELEYLQKELAKLPLEGEYELSATTVSKSGIRATQVKVKLREHHHHDHRTFGNIRAMILSSALSLRIKERALKMFQKIAEAESRIHAKPLEQVAFHEVGAIDSIIDIVGSAIGLEALGVEKIYASRIELGGGFVRCAHGLLPVPAPATLEILQGLPIGLHGVPFEATTPTGAAILACNVDSFSGSLPLSPQKIGYGAGEREGVDIPNILRLILADEPVQPSPKEVLLETNIDDMSPEHLAYAVERLFEAGALDVYMTPITTKKNRLATKLSILSLLDKERELTQILFQETSSIGLRRLEVEKIALARRFIQVPTPWGEVSVKLSMQGEKVVRYKAEYEECRRLAMTHSVPLHTLYLAIDKAVESCLNDTNH</sequence>